<protein>
    <recommendedName>
        <fullName evidence="1">Urease subunit beta</fullName>
        <ecNumber evidence="1">3.5.1.5</ecNumber>
    </recommendedName>
    <alternativeName>
        <fullName evidence="1">Urea amidohydrolase subunit beta</fullName>
    </alternativeName>
</protein>
<proteinExistence type="inferred from homology"/>
<accession>Q28RJ8</accession>
<reference key="1">
    <citation type="submission" date="2006-02" db="EMBL/GenBank/DDBJ databases">
        <title>Complete sequence of chromosome of Jannaschia sp. CCS1.</title>
        <authorList>
            <consortium name="US DOE Joint Genome Institute"/>
            <person name="Copeland A."/>
            <person name="Lucas S."/>
            <person name="Lapidus A."/>
            <person name="Barry K."/>
            <person name="Detter J.C."/>
            <person name="Glavina del Rio T."/>
            <person name="Hammon N."/>
            <person name="Israni S."/>
            <person name="Pitluck S."/>
            <person name="Brettin T."/>
            <person name="Bruce D."/>
            <person name="Han C."/>
            <person name="Tapia R."/>
            <person name="Gilna P."/>
            <person name="Chertkov O."/>
            <person name="Saunders E."/>
            <person name="Schmutz J."/>
            <person name="Larimer F."/>
            <person name="Land M."/>
            <person name="Kyrpides N."/>
            <person name="Lykidis A."/>
            <person name="Moran M.A."/>
            <person name="Belas R."/>
            <person name="Ye W."/>
            <person name="Buchan A."/>
            <person name="Gonzalez J.M."/>
            <person name="Schell M.A."/>
            <person name="Richardson P."/>
        </authorList>
    </citation>
    <scope>NUCLEOTIDE SEQUENCE [LARGE SCALE GENOMIC DNA]</scope>
    <source>
        <strain>CCS1</strain>
    </source>
</reference>
<name>URE2_JANSC</name>
<evidence type="ECO:0000255" key="1">
    <source>
        <dbReference type="HAMAP-Rule" id="MF_01954"/>
    </source>
</evidence>
<keyword id="KW-0963">Cytoplasm</keyword>
<keyword id="KW-0378">Hydrolase</keyword>
<keyword id="KW-1185">Reference proteome</keyword>
<organism>
    <name type="scientific">Jannaschia sp. (strain CCS1)</name>
    <dbReference type="NCBI Taxonomy" id="290400"/>
    <lineage>
        <taxon>Bacteria</taxon>
        <taxon>Pseudomonadati</taxon>
        <taxon>Pseudomonadota</taxon>
        <taxon>Alphaproteobacteria</taxon>
        <taxon>Rhodobacterales</taxon>
        <taxon>Roseobacteraceae</taxon>
        <taxon>Jannaschia</taxon>
    </lineage>
</organism>
<sequence length="101" mass="10776">MIPGEVMPADGTIELNAGAQAVTLEVSNTGDRPIQVGSHYHFGEANGALDFDRDAARGMRLDIAAGTAVRFEPGQTREVRLVPYGGARRVFGFNQTVMGDL</sequence>
<dbReference type="EC" id="3.5.1.5" evidence="1"/>
<dbReference type="EMBL" id="CP000264">
    <property type="protein sequence ID" value="ABD54664.1"/>
    <property type="molecule type" value="Genomic_DNA"/>
</dbReference>
<dbReference type="RefSeq" id="WP_011454869.1">
    <property type="nucleotide sequence ID" value="NC_007802.1"/>
</dbReference>
<dbReference type="SMR" id="Q28RJ8"/>
<dbReference type="STRING" id="290400.Jann_1747"/>
<dbReference type="KEGG" id="jan:Jann_1747"/>
<dbReference type="eggNOG" id="COG0832">
    <property type="taxonomic scope" value="Bacteria"/>
</dbReference>
<dbReference type="HOGENOM" id="CLU_129707_1_1_5"/>
<dbReference type="OrthoDB" id="9797217at2"/>
<dbReference type="UniPathway" id="UPA00258">
    <property type="reaction ID" value="UER00370"/>
</dbReference>
<dbReference type="Proteomes" id="UP000008326">
    <property type="component" value="Chromosome"/>
</dbReference>
<dbReference type="GO" id="GO:0035550">
    <property type="term" value="C:urease complex"/>
    <property type="evidence" value="ECO:0007669"/>
    <property type="project" value="InterPro"/>
</dbReference>
<dbReference type="GO" id="GO:0009039">
    <property type="term" value="F:urease activity"/>
    <property type="evidence" value="ECO:0007669"/>
    <property type="project" value="UniProtKB-UniRule"/>
</dbReference>
<dbReference type="GO" id="GO:0043419">
    <property type="term" value="P:urea catabolic process"/>
    <property type="evidence" value="ECO:0007669"/>
    <property type="project" value="UniProtKB-UniRule"/>
</dbReference>
<dbReference type="CDD" id="cd00407">
    <property type="entry name" value="Urease_beta"/>
    <property type="match status" value="1"/>
</dbReference>
<dbReference type="FunFam" id="2.10.150.10:FF:000001">
    <property type="entry name" value="Urease subunit beta"/>
    <property type="match status" value="1"/>
</dbReference>
<dbReference type="Gene3D" id="2.10.150.10">
    <property type="entry name" value="Urease, beta subunit"/>
    <property type="match status" value="1"/>
</dbReference>
<dbReference type="HAMAP" id="MF_01954">
    <property type="entry name" value="Urease_beta"/>
    <property type="match status" value="1"/>
</dbReference>
<dbReference type="InterPro" id="IPR002019">
    <property type="entry name" value="Urease_beta-like"/>
</dbReference>
<dbReference type="InterPro" id="IPR036461">
    <property type="entry name" value="Urease_betasu_sf"/>
</dbReference>
<dbReference type="InterPro" id="IPR050069">
    <property type="entry name" value="Urease_subunit"/>
</dbReference>
<dbReference type="NCBIfam" id="NF009682">
    <property type="entry name" value="PRK13203.1"/>
    <property type="match status" value="1"/>
</dbReference>
<dbReference type="NCBIfam" id="TIGR00192">
    <property type="entry name" value="urease_beta"/>
    <property type="match status" value="1"/>
</dbReference>
<dbReference type="PANTHER" id="PTHR33569">
    <property type="entry name" value="UREASE"/>
    <property type="match status" value="1"/>
</dbReference>
<dbReference type="PANTHER" id="PTHR33569:SF1">
    <property type="entry name" value="UREASE"/>
    <property type="match status" value="1"/>
</dbReference>
<dbReference type="Pfam" id="PF00699">
    <property type="entry name" value="Urease_beta"/>
    <property type="match status" value="1"/>
</dbReference>
<dbReference type="SUPFAM" id="SSF51278">
    <property type="entry name" value="Urease, beta-subunit"/>
    <property type="match status" value="1"/>
</dbReference>
<feature type="chain" id="PRO_0000239894" description="Urease subunit beta">
    <location>
        <begin position="1"/>
        <end position="101"/>
    </location>
</feature>
<gene>
    <name evidence="1" type="primary">ureB</name>
    <name type="ordered locus">Jann_1747</name>
</gene>
<comment type="catalytic activity">
    <reaction evidence="1">
        <text>urea + 2 H2O + H(+) = hydrogencarbonate + 2 NH4(+)</text>
        <dbReference type="Rhea" id="RHEA:20557"/>
        <dbReference type="ChEBI" id="CHEBI:15377"/>
        <dbReference type="ChEBI" id="CHEBI:15378"/>
        <dbReference type="ChEBI" id="CHEBI:16199"/>
        <dbReference type="ChEBI" id="CHEBI:17544"/>
        <dbReference type="ChEBI" id="CHEBI:28938"/>
        <dbReference type="EC" id="3.5.1.5"/>
    </reaction>
</comment>
<comment type="pathway">
    <text evidence="1">Nitrogen metabolism; urea degradation; CO(2) and NH(3) from urea (urease route): step 1/1.</text>
</comment>
<comment type="subunit">
    <text evidence="1">Heterotrimer of UreA (gamma), UreB (beta) and UreC (alpha) subunits. Three heterotrimers associate to form the active enzyme.</text>
</comment>
<comment type="subcellular location">
    <subcellularLocation>
        <location evidence="1">Cytoplasm</location>
    </subcellularLocation>
</comment>
<comment type="similarity">
    <text evidence="1">Belongs to the urease beta subunit family.</text>
</comment>